<protein>
    <recommendedName>
        <fullName>Transmembrane protein 125</fullName>
    </recommendedName>
</protein>
<feature type="chain" id="PRO_0000251716" description="Transmembrane protein 125">
    <location>
        <begin position="1"/>
        <end position="219"/>
    </location>
</feature>
<feature type="transmembrane region" description="Helical" evidence="1">
    <location>
        <begin position="36"/>
        <end position="56"/>
    </location>
</feature>
<feature type="transmembrane region" description="Helical" evidence="1">
    <location>
        <begin position="68"/>
        <end position="88"/>
    </location>
</feature>
<feature type="transmembrane region" description="Helical" evidence="1">
    <location>
        <begin position="114"/>
        <end position="134"/>
    </location>
</feature>
<feature type="transmembrane region" description="Helical" evidence="1">
    <location>
        <begin position="147"/>
        <end position="167"/>
    </location>
</feature>
<feature type="sequence variant" id="VAR_035669" description="In a breast cancer sample; somatic mutation." evidence="2">
    <original>R</original>
    <variation>L</variation>
    <location>
        <position position="107"/>
    </location>
</feature>
<feature type="sequence variant" id="VAR_051428" description="In dbSNP:rs35880191.">
    <original>A</original>
    <variation>D</variation>
    <location>
        <position position="112"/>
    </location>
</feature>
<proteinExistence type="evidence at protein level"/>
<comment type="subcellular location">
    <subcellularLocation>
        <location evidence="3">Membrane</location>
        <topology evidence="3">Multi-pass membrane protein</topology>
    </subcellularLocation>
</comment>
<evidence type="ECO:0000255" key="1"/>
<evidence type="ECO:0000269" key="2">
    <source>
    </source>
</evidence>
<evidence type="ECO:0000305" key="3"/>
<organism>
    <name type="scientific">Homo sapiens</name>
    <name type="common">Human</name>
    <dbReference type="NCBI Taxonomy" id="9606"/>
    <lineage>
        <taxon>Eukaryota</taxon>
        <taxon>Metazoa</taxon>
        <taxon>Chordata</taxon>
        <taxon>Craniata</taxon>
        <taxon>Vertebrata</taxon>
        <taxon>Euteleostomi</taxon>
        <taxon>Mammalia</taxon>
        <taxon>Eutheria</taxon>
        <taxon>Euarchontoglires</taxon>
        <taxon>Primates</taxon>
        <taxon>Haplorrhini</taxon>
        <taxon>Catarrhini</taxon>
        <taxon>Hominidae</taxon>
        <taxon>Homo</taxon>
    </lineage>
</organism>
<name>TM125_HUMAN</name>
<sequence>MSEQEAQAPGGRGLPPDMLAEQVELWWSQQPRRSALCFVVAVGLVAGCGAGGVALLSTTSSRSGEWRLATGTVLCLLALLVLVKQLMSSAVQDMNCIRQAHHVALLRSGGGADALVVLLSGLVLLVTGLTLAGLAAAPAPARPLAAMLSVGIALAALGSLLLLGLLLYQVGVSGHCPSICMATPSTHSGHGGHGSIFSISGQLSAGRRHETTSSIASLI</sequence>
<keyword id="KW-0472">Membrane</keyword>
<keyword id="KW-1267">Proteomics identification</keyword>
<keyword id="KW-1185">Reference proteome</keyword>
<keyword id="KW-0812">Transmembrane</keyword>
<keyword id="KW-1133">Transmembrane helix</keyword>
<dbReference type="EMBL" id="CH471059">
    <property type="protein sequence ID" value="EAX07110.1"/>
    <property type="molecule type" value="Genomic_DNA"/>
</dbReference>
<dbReference type="EMBL" id="CH471059">
    <property type="protein sequence ID" value="EAX07111.1"/>
    <property type="molecule type" value="Genomic_DNA"/>
</dbReference>
<dbReference type="EMBL" id="BC016858">
    <property type="protein sequence ID" value="AAH16858.1"/>
    <property type="molecule type" value="mRNA"/>
</dbReference>
<dbReference type="CCDS" id="CCDS480.1"/>
<dbReference type="RefSeq" id="NP_001307173.1">
    <property type="nucleotide sequence ID" value="NM_001320244.2"/>
</dbReference>
<dbReference type="RefSeq" id="NP_653227.1">
    <property type="nucleotide sequence ID" value="NM_144626.3"/>
</dbReference>
<dbReference type="RefSeq" id="XP_005270524.1">
    <property type="nucleotide sequence ID" value="XM_005270467.5"/>
</dbReference>
<dbReference type="RefSeq" id="XP_011539007.1">
    <property type="nucleotide sequence ID" value="XM_011540705.3"/>
</dbReference>
<dbReference type="RefSeq" id="XP_047301911.1">
    <property type="nucleotide sequence ID" value="XM_047445955.1"/>
</dbReference>
<dbReference type="RefSeq" id="XP_054190393.1">
    <property type="nucleotide sequence ID" value="XM_054334418.1"/>
</dbReference>
<dbReference type="RefSeq" id="XP_054190394.1">
    <property type="nucleotide sequence ID" value="XM_054334419.1"/>
</dbReference>
<dbReference type="RefSeq" id="XP_054190395.1">
    <property type="nucleotide sequence ID" value="XM_054334420.1"/>
</dbReference>
<dbReference type="STRING" id="9606.ENSP00000429275"/>
<dbReference type="iPTMnet" id="Q96AQ2"/>
<dbReference type="PhosphoSitePlus" id="Q96AQ2"/>
<dbReference type="SwissPalm" id="Q96AQ2"/>
<dbReference type="BioMuta" id="TMEM125"/>
<dbReference type="DMDM" id="74731141"/>
<dbReference type="MassIVE" id="Q96AQ2"/>
<dbReference type="PaxDb" id="9606-ENSP00000429275"/>
<dbReference type="PeptideAtlas" id="Q96AQ2"/>
<dbReference type="ProteomicsDB" id="75986"/>
<dbReference type="Antibodypedia" id="18202">
    <property type="antibodies" value="34 antibodies from 9 providers"/>
</dbReference>
<dbReference type="DNASU" id="128218"/>
<dbReference type="Ensembl" id="ENST00000432792.6">
    <property type="protein sequence ID" value="ENSP00000429275.1"/>
    <property type="gene ID" value="ENSG00000179178.11"/>
</dbReference>
<dbReference type="Ensembl" id="ENST00000439858.6">
    <property type="protein sequence ID" value="ENSP00000429775.1"/>
    <property type="gene ID" value="ENSG00000179178.11"/>
</dbReference>
<dbReference type="GeneID" id="128218"/>
<dbReference type="KEGG" id="hsa:128218"/>
<dbReference type="MANE-Select" id="ENST00000439858.6">
    <property type="protein sequence ID" value="ENSP00000429775.1"/>
    <property type="RefSeq nucleotide sequence ID" value="NM_144626.3"/>
    <property type="RefSeq protein sequence ID" value="NP_653227.1"/>
</dbReference>
<dbReference type="UCSC" id="uc001cir.4">
    <property type="organism name" value="human"/>
</dbReference>
<dbReference type="AGR" id="HGNC:28275"/>
<dbReference type="CTD" id="128218"/>
<dbReference type="DisGeNET" id="128218"/>
<dbReference type="GeneCards" id="TMEM125"/>
<dbReference type="HGNC" id="HGNC:28275">
    <property type="gene designation" value="TMEM125"/>
</dbReference>
<dbReference type="HPA" id="ENSG00000179178">
    <property type="expression patterns" value="Tissue enhanced (lung, pancreas)"/>
</dbReference>
<dbReference type="neXtProt" id="NX_Q96AQ2"/>
<dbReference type="OpenTargets" id="ENSG00000179178"/>
<dbReference type="PharmGKB" id="PA143485644"/>
<dbReference type="VEuPathDB" id="HostDB:ENSG00000179178"/>
<dbReference type="eggNOG" id="ENOG502S0IK">
    <property type="taxonomic scope" value="Eukaryota"/>
</dbReference>
<dbReference type="GeneTree" id="ENSGT00390000003015"/>
<dbReference type="HOGENOM" id="CLU_118850_0_0_1"/>
<dbReference type="InParanoid" id="Q96AQ2"/>
<dbReference type="OMA" id="MNCVRQP"/>
<dbReference type="OrthoDB" id="8950495at2759"/>
<dbReference type="PAN-GO" id="Q96AQ2">
    <property type="GO annotations" value="0 GO annotations based on evolutionary models"/>
</dbReference>
<dbReference type="PhylomeDB" id="Q96AQ2"/>
<dbReference type="TreeFam" id="TF332758"/>
<dbReference type="PathwayCommons" id="Q96AQ2"/>
<dbReference type="BioGRID-ORCS" id="128218">
    <property type="hits" value="11 hits in 1139 CRISPR screens"/>
</dbReference>
<dbReference type="ChiTaRS" id="TMEM125">
    <property type="organism name" value="human"/>
</dbReference>
<dbReference type="GenomeRNAi" id="128218"/>
<dbReference type="Pharos" id="Q96AQ2">
    <property type="development level" value="Tdark"/>
</dbReference>
<dbReference type="PRO" id="PR:Q96AQ2"/>
<dbReference type="Proteomes" id="UP000005640">
    <property type="component" value="Chromosome 1"/>
</dbReference>
<dbReference type="RNAct" id="Q96AQ2">
    <property type="molecule type" value="protein"/>
</dbReference>
<dbReference type="Bgee" id="ENSG00000179178">
    <property type="expression patterns" value="Expressed in ileal mucosa and 146 other cell types or tissues"/>
</dbReference>
<dbReference type="ExpressionAtlas" id="Q96AQ2">
    <property type="expression patterns" value="baseline and differential"/>
</dbReference>
<dbReference type="GO" id="GO:0016020">
    <property type="term" value="C:membrane"/>
    <property type="evidence" value="ECO:0007669"/>
    <property type="project" value="UniProtKB-SubCell"/>
</dbReference>
<dbReference type="InterPro" id="IPR028165">
    <property type="entry name" value="TMEM125"/>
</dbReference>
<dbReference type="PANTHER" id="PTHR31416">
    <property type="entry name" value="TRANSMEMBRANE PROTEIN 125"/>
    <property type="match status" value="1"/>
</dbReference>
<dbReference type="PANTHER" id="PTHR31416:SF1">
    <property type="entry name" value="TRANSMEMBRANE PROTEIN 125"/>
    <property type="match status" value="1"/>
</dbReference>
<dbReference type="Pfam" id="PF15109">
    <property type="entry name" value="TMEM125"/>
    <property type="match status" value="1"/>
</dbReference>
<reference key="1">
    <citation type="submission" date="2005-09" db="EMBL/GenBank/DDBJ databases">
        <authorList>
            <person name="Mural R.J."/>
            <person name="Istrail S."/>
            <person name="Sutton G.G."/>
            <person name="Florea L."/>
            <person name="Halpern A.L."/>
            <person name="Mobarry C.M."/>
            <person name="Lippert R."/>
            <person name="Walenz B."/>
            <person name="Shatkay H."/>
            <person name="Dew I."/>
            <person name="Miller J.R."/>
            <person name="Flanigan M.J."/>
            <person name="Edwards N.J."/>
            <person name="Bolanos R."/>
            <person name="Fasulo D."/>
            <person name="Halldorsson B.V."/>
            <person name="Hannenhalli S."/>
            <person name="Turner R."/>
            <person name="Yooseph S."/>
            <person name="Lu F."/>
            <person name="Nusskern D.R."/>
            <person name="Shue B.C."/>
            <person name="Zheng X.H."/>
            <person name="Zhong F."/>
            <person name="Delcher A.L."/>
            <person name="Huson D.H."/>
            <person name="Kravitz S.A."/>
            <person name="Mouchard L."/>
            <person name="Reinert K."/>
            <person name="Remington K.A."/>
            <person name="Clark A.G."/>
            <person name="Waterman M.S."/>
            <person name="Eichler E.E."/>
            <person name="Adams M.D."/>
            <person name="Hunkapiller M.W."/>
            <person name="Myers E.W."/>
            <person name="Venter J.C."/>
        </authorList>
    </citation>
    <scope>NUCLEOTIDE SEQUENCE [LARGE SCALE GENOMIC DNA]</scope>
</reference>
<reference key="2">
    <citation type="journal article" date="2004" name="Genome Res.">
        <title>The status, quality, and expansion of the NIH full-length cDNA project: the Mammalian Gene Collection (MGC).</title>
        <authorList>
            <consortium name="The MGC Project Team"/>
        </authorList>
    </citation>
    <scope>NUCLEOTIDE SEQUENCE [LARGE SCALE MRNA]</scope>
    <source>
        <tissue>Colon</tissue>
    </source>
</reference>
<reference key="3">
    <citation type="journal article" date="2006" name="Science">
        <title>The consensus coding sequences of human breast and colorectal cancers.</title>
        <authorList>
            <person name="Sjoeblom T."/>
            <person name="Jones S."/>
            <person name="Wood L.D."/>
            <person name="Parsons D.W."/>
            <person name="Lin J."/>
            <person name="Barber T.D."/>
            <person name="Mandelker D."/>
            <person name="Leary R.J."/>
            <person name="Ptak J."/>
            <person name="Silliman N."/>
            <person name="Szabo S."/>
            <person name="Buckhaults P."/>
            <person name="Farrell C."/>
            <person name="Meeh P."/>
            <person name="Markowitz S.D."/>
            <person name="Willis J."/>
            <person name="Dawson D."/>
            <person name="Willson J.K.V."/>
            <person name="Gazdar A.F."/>
            <person name="Hartigan J."/>
            <person name="Wu L."/>
            <person name="Liu C."/>
            <person name="Parmigiani G."/>
            <person name="Park B.H."/>
            <person name="Bachman K.E."/>
            <person name="Papadopoulos N."/>
            <person name="Vogelstein B."/>
            <person name="Kinzler K.W."/>
            <person name="Velculescu V.E."/>
        </authorList>
    </citation>
    <scope>VARIANT [LARGE SCALE ANALYSIS] LEU-107</scope>
</reference>
<accession>Q96AQ2</accession>
<accession>D3DPX1</accession>
<gene>
    <name type="primary">TMEM125</name>
</gene>